<organism>
    <name type="scientific">Mus musculus</name>
    <name type="common">Mouse</name>
    <dbReference type="NCBI Taxonomy" id="10090"/>
    <lineage>
        <taxon>Eukaryota</taxon>
        <taxon>Metazoa</taxon>
        <taxon>Chordata</taxon>
        <taxon>Craniata</taxon>
        <taxon>Vertebrata</taxon>
        <taxon>Euteleostomi</taxon>
        <taxon>Mammalia</taxon>
        <taxon>Eutheria</taxon>
        <taxon>Euarchontoglires</taxon>
        <taxon>Glires</taxon>
        <taxon>Rodentia</taxon>
        <taxon>Myomorpha</taxon>
        <taxon>Muroidea</taxon>
        <taxon>Muridae</taxon>
        <taxon>Murinae</taxon>
        <taxon>Mus</taxon>
        <taxon>Mus</taxon>
    </lineage>
</organism>
<name>ETV3_MOUSE</name>
<protein>
    <recommendedName>
        <fullName>ETS translocation variant 3</fullName>
    </recommendedName>
    <alternativeName>
        <fullName>ETS domain transcriptional repressor PE1</fullName>
        <shortName>PE-1</shortName>
    </alternativeName>
    <alternativeName>
        <fullName>Mitogenic Ets transcriptional suppressor</fullName>
    </alternativeName>
</protein>
<evidence type="ECO:0000250" key="1">
    <source>
        <dbReference type="UniProtKB" id="P41162"/>
    </source>
</evidence>
<evidence type="ECO:0000255" key="2">
    <source>
        <dbReference type="PROSITE-ProRule" id="PRU00237"/>
    </source>
</evidence>
<evidence type="ECO:0000256" key="3">
    <source>
        <dbReference type="SAM" id="MobiDB-lite"/>
    </source>
</evidence>
<evidence type="ECO:0000269" key="4">
    <source>
    </source>
</evidence>
<evidence type="ECO:0000269" key="5">
    <source>
    </source>
</evidence>
<evidence type="ECO:0000305" key="6"/>
<evidence type="ECO:0007744" key="7">
    <source>
    </source>
</evidence>
<comment type="function">
    <text evidence="4 5">Transcriptional repressor that contribute to growth arrest during terminal macrophage differentiation by repressing target genes involved in Ras-dependent proliferation. Represses MMP1 promoter activity.</text>
</comment>
<comment type="subcellular location">
    <subcellularLocation>
        <location evidence="2">Nucleus</location>
    </subcellularLocation>
</comment>
<comment type="similarity">
    <text evidence="6">Belongs to the ETS family.</text>
</comment>
<feature type="chain" id="PRO_0000204115" description="ETS translocation variant 3">
    <location>
        <begin position="1"/>
        <end position="513"/>
    </location>
</feature>
<feature type="DNA-binding region" description="ETS" evidence="2">
    <location>
        <begin position="35"/>
        <end position="116"/>
    </location>
</feature>
<feature type="region of interest" description="Disordered" evidence="3">
    <location>
        <begin position="138"/>
        <end position="202"/>
    </location>
</feature>
<feature type="region of interest" description="Disordered" evidence="3">
    <location>
        <begin position="333"/>
        <end position="513"/>
    </location>
</feature>
<feature type="compositionally biased region" description="Basic and acidic residues" evidence="3">
    <location>
        <begin position="357"/>
        <end position="366"/>
    </location>
</feature>
<feature type="compositionally biased region" description="Basic and acidic residues" evidence="3">
    <location>
        <begin position="380"/>
        <end position="392"/>
    </location>
</feature>
<feature type="compositionally biased region" description="Basic and acidic residues" evidence="3">
    <location>
        <begin position="399"/>
        <end position="419"/>
    </location>
</feature>
<feature type="compositionally biased region" description="Polar residues" evidence="3">
    <location>
        <begin position="430"/>
        <end position="439"/>
    </location>
</feature>
<feature type="compositionally biased region" description="Acidic residues" evidence="3">
    <location>
        <begin position="441"/>
        <end position="450"/>
    </location>
</feature>
<feature type="compositionally biased region" description="Basic and acidic residues" evidence="3">
    <location>
        <begin position="451"/>
        <end position="466"/>
    </location>
</feature>
<feature type="compositionally biased region" description="Basic and acidic residues" evidence="3">
    <location>
        <begin position="477"/>
        <end position="489"/>
    </location>
</feature>
<feature type="compositionally biased region" description="Low complexity" evidence="3">
    <location>
        <begin position="504"/>
        <end position="513"/>
    </location>
</feature>
<feature type="modified residue" description="Phosphoserine" evidence="1">
    <location>
        <position position="139"/>
    </location>
</feature>
<feature type="modified residue" description="Phosphoserine" evidence="1">
    <location>
        <position position="159"/>
    </location>
</feature>
<feature type="modified residue" description="Phosphoserine" evidence="7">
    <location>
        <position position="315"/>
    </location>
</feature>
<feature type="modified residue" description="N6-acetyllysine; alternate" evidence="1">
    <location>
        <position position="388"/>
    </location>
</feature>
<feature type="cross-link" description="Glycyl lysine isopeptide (Lys-Gly) (interchain with G-Cter in SUMO2)" evidence="1">
    <location>
        <position position="381"/>
    </location>
</feature>
<feature type="cross-link" description="Glycyl lysine isopeptide (Lys-Gly) (interchain with G-Cter in SUMO2); alternate" evidence="1">
    <location>
        <position position="388"/>
    </location>
</feature>
<feature type="sequence conflict" description="In Ref. 3; AAF09185." evidence="6" ref="3">
    <original>G</original>
    <variation>R</variation>
    <location>
        <position position="182"/>
    </location>
</feature>
<feature type="sequence conflict" description="In Ref. 3; AAF09185." evidence="6" ref="3">
    <original>H</original>
    <variation>R</variation>
    <location>
        <position position="244"/>
    </location>
</feature>
<feature type="sequence conflict" description="In Ref. 1; AAK56845, 2; AAQ18663, 3; AAF09185 and 6; AAH78636." evidence="6" ref="1 2 3 6">
    <original>M</original>
    <variation>I</variation>
    <location>
        <position position="410"/>
    </location>
</feature>
<feature type="sequence conflict" description="In Ref. 1; AAK56845, 2; AAQ18663, 3; AAF09185 and 6; AAH78636." evidence="6" ref="1 2 3 6">
    <original>V</original>
    <variation>A</variation>
    <location>
        <position position="454"/>
    </location>
</feature>
<gene>
    <name type="primary">Etv3</name>
    <name type="synonym">Mets</name>
    <name type="synonym">Pe1</name>
</gene>
<reference key="1">
    <citation type="journal article" date="2002" name="Cell">
        <title>An induced Ets repressor complex regulates growth arrest during terminal macrophage differentiation.</title>
        <authorList>
            <person name="Klappacher G.W."/>
            <person name="Lunyak V.V."/>
            <person name="Sykes D.B."/>
            <person name="Sawka-Verhelle D."/>
            <person name="Sage J."/>
            <person name="Brard G."/>
            <person name="Ngo S.D."/>
            <person name="Gangadharan D."/>
            <person name="Jacks T."/>
            <person name="Kamps M.P."/>
            <person name="Rose D.W."/>
            <person name="Rosenfeld M.G."/>
            <person name="Glass C.K."/>
        </authorList>
    </citation>
    <scope>NUCLEOTIDE SEQUENCE [MRNA]</scope>
    <scope>FUNCTION</scope>
</reference>
<reference key="2">
    <citation type="journal article" date="2004" name="J. Biol. Chem.">
        <title>PE-1/METS, an antiproliferative Ets repressor factor, is induced by CREB-1/CREM-1 during macrophage differentiation.</title>
        <authorList>
            <person name="Sawka-Verhelle D."/>
            <person name="Escoubet-Lozach L."/>
            <person name="Fong A.L."/>
            <person name="Hester K.D."/>
            <person name="Herzig S."/>
            <person name="Lebrun P."/>
            <person name="Glass C.K."/>
        </authorList>
    </citation>
    <scope>NUCLEOTIDE SEQUENCE [GENOMIC DNA]</scope>
    <source>
        <strain>129/SvJ</strain>
    </source>
</reference>
<reference key="3">
    <citation type="journal article" date="2000" name="Biochemistry">
        <title>Ets domain transcription factor PE1 suppresses human interstitial collagenase promoter activity by antagonizing protein-DNA interactions at a critical AP1 element.</title>
        <authorList>
            <person name="Bidder M."/>
            <person name="Loewy A.P."/>
            <person name="Latifi T."/>
            <person name="Newberry E.P."/>
            <person name="Ferguson G."/>
            <person name="Willis D.M."/>
            <person name="Towler D.A."/>
        </authorList>
    </citation>
    <scope>NUCLEOTIDE SEQUENCE [MRNA]</scope>
    <scope>FUNCTION</scope>
    <source>
        <tissue>Brain</tissue>
    </source>
</reference>
<reference key="4">
    <citation type="journal article" date="2009" name="PLoS Biol.">
        <title>Lineage-specific biology revealed by a finished genome assembly of the mouse.</title>
        <authorList>
            <person name="Church D.M."/>
            <person name="Goodstadt L."/>
            <person name="Hillier L.W."/>
            <person name="Zody M.C."/>
            <person name="Goldstein S."/>
            <person name="She X."/>
            <person name="Bult C.J."/>
            <person name="Agarwala R."/>
            <person name="Cherry J.L."/>
            <person name="DiCuccio M."/>
            <person name="Hlavina W."/>
            <person name="Kapustin Y."/>
            <person name="Meric P."/>
            <person name="Maglott D."/>
            <person name="Birtle Z."/>
            <person name="Marques A.C."/>
            <person name="Graves T."/>
            <person name="Zhou S."/>
            <person name="Teague B."/>
            <person name="Potamousis K."/>
            <person name="Churas C."/>
            <person name="Place M."/>
            <person name="Herschleb J."/>
            <person name="Runnheim R."/>
            <person name="Forrest D."/>
            <person name="Amos-Landgraf J."/>
            <person name="Schwartz D.C."/>
            <person name="Cheng Z."/>
            <person name="Lindblad-Toh K."/>
            <person name="Eichler E.E."/>
            <person name="Ponting C.P."/>
        </authorList>
    </citation>
    <scope>NUCLEOTIDE SEQUENCE [LARGE SCALE GENOMIC DNA]</scope>
    <source>
        <strain>C57BL/6J</strain>
    </source>
</reference>
<reference key="5">
    <citation type="submission" date="2005-07" db="EMBL/GenBank/DDBJ databases">
        <authorList>
            <person name="Mural R.J."/>
            <person name="Adams M.D."/>
            <person name="Myers E.W."/>
            <person name="Smith H.O."/>
            <person name="Venter J.C."/>
        </authorList>
    </citation>
    <scope>NUCLEOTIDE SEQUENCE [LARGE SCALE GENOMIC DNA]</scope>
</reference>
<reference key="6">
    <citation type="journal article" date="2004" name="Genome Res.">
        <title>The status, quality, and expansion of the NIH full-length cDNA project: the Mammalian Gene Collection (MGC).</title>
        <authorList>
            <consortium name="The MGC Project Team"/>
        </authorList>
    </citation>
    <scope>NUCLEOTIDE SEQUENCE [LARGE SCALE MRNA]</scope>
    <source>
        <strain>NMRI</strain>
        <tissue>Mammary tumor</tissue>
    </source>
</reference>
<reference key="7">
    <citation type="journal article" date="2010" name="Cell">
        <title>A tissue-specific atlas of mouse protein phosphorylation and expression.</title>
        <authorList>
            <person name="Huttlin E.L."/>
            <person name="Jedrychowski M.P."/>
            <person name="Elias J.E."/>
            <person name="Goswami T."/>
            <person name="Rad R."/>
            <person name="Beausoleil S.A."/>
            <person name="Villen J."/>
            <person name="Haas W."/>
            <person name="Sowa M.E."/>
            <person name="Gygi S.P."/>
        </authorList>
    </citation>
    <scope>PHOSPHORYLATION [LARGE SCALE ANALYSIS] AT SER-315</scope>
    <scope>IDENTIFICATION BY MASS SPECTROMETRY [LARGE SCALE ANALYSIS]</scope>
    <source>
        <tissue>Spleen</tissue>
    </source>
</reference>
<sequence length="513" mass="57026">MKAGCSIVEKPEGGGGYQFPDWAYKAESSPGSRQIQLWHFILELLQKEEFRHVIAWQQGEYGEFVIKDPDEVARLWGRRKCKPQMNYDKLSRALRYYYNKRILHKTKGKRFTYKFNFNKLVMPNYPFINIRSSGVVPQSAPPVPTASSRFHFPPLDSHSPTGDVQPGRFSASSLSASGPESGVTTDRKVEPSDLEDGSASDWHRGMDFMPSRNALGGGAVGHQKRKPDILLPLFTRPAMYPDPHSPFAISPVPGRGGVLNVPISPALSLTPTMFSYSPSPGLSPFTSSSCFSFNPEEMKHYLHSQACSVFNYHLSPRTFPRYPGLMVPPLQCQMHPEEPSQFSIKLQPPPAGRKNRERVESREEAVRGSVPASAPVPSRIKVEPATEKDPDSLRQSTQGKEEQTQEVDSMRSRTIEEGKGTGFAHPSPTWPSVSISTPSDEPLEGTEDSEDRSVREPGVPEKKEDALMPPKLRLKRRWNDDPEARELNKTGKFLWNGAGPQGLATTATAAADA</sequence>
<proteinExistence type="evidence at protein level"/>
<dbReference type="EMBL" id="AF218539">
    <property type="protein sequence ID" value="AAK56845.1"/>
    <property type="molecule type" value="mRNA"/>
</dbReference>
<dbReference type="EMBL" id="AY274927">
    <property type="protein sequence ID" value="AAQ18663.1"/>
    <property type="molecule type" value="Genomic_DNA"/>
</dbReference>
<dbReference type="EMBL" id="AF156530">
    <property type="protein sequence ID" value="AAF09185.1"/>
    <property type="molecule type" value="mRNA"/>
</dbReference>
<dbReference type="EMBL" id="AC139241">
    <property type="status" value="NOT_ANNOTATED_CDS"/>
    <property type="molecule type" value="Genomic_DNA"/>
</dbReference>
<dbReference type="EMBL" id="CH466547">
    <property type="protein sequence ID" value="EDL15354.1"/>
    <property type="molecule type" value="Genomic_DNA"/>
</dbReference>
<dbReference type="EMBL" id="BC078636">
    <property type="protein sequence ID" value="AAH78636.1"/>
    <property type="molecule type" value="mRNA"/>
</dbReference>
<dbReference type="CCDS" id="CCDS17453.1"/>
<dbReference type="RefSeq" id="NP_001076787.1">
    <property type="nucleotide sequence ID" value="NM_001083318.3"/>
</dbReference>
<dbReference type="RefSeq" id="NP_001273773.1">
    <property type="nucleotide sequence ID" value="NM_001286844.2"/>
</dbReference>
<dbReference type="RefSeq" id="NP_036181.3">
    <property type="nucleotide sequence ID" value="NM_012051.4"/>
</dbReference>
<dbReference type="SMR" id="Q8R4Z4"/>
<dbReference type="BioGRID" id="205105">
    <property type="interactions" value="2"/>
</dbReference>
<dbReference type="FunCoup" id="Q8R4Z4">
    <property type="interactions" value="2342"/>
</dbReference>
<dbReference type="IntAct" id="Q8R4Z4">
    <property type="interactions" value="1"/>
</dbReference>
<dbReference type="STRING" id="10090.ENSMUSP00000112915"/>
<dbReference type="GlyGen" id="Q8R4Z4">
    <property type="glycosylation" value="1 site"/>
</dbReference>
<dbReference type="iPTMnet" id="Q8R4Z4"/>
<dbReference type="PhosphoSitePlus" id="Q8R4Z4"/>
<dbReference type="jPOST" id="Q8R4Z4"/>
<dbReference type="PaxDb" id="10090-ENSMUSP00000112915"/>
<dbReference type="ProteomicsDB" id="275802"/>
<dbReference type="Pumba" id="Q8R4Z4"/>
<dbReference type="Antibodypedia" id="1438">
    <property type="antibodies" value="66 antibodies from 18 providers"/>
</dbReference>
<dbReference type="DNASU" id="27049"/>
<dbReference type="Ensembl" id="ENSMUST00000119109.8">
    <property type="protein sequence ID" value="ENSMUSP00000112915.2"/>
    <property type="gene ID" value="ENSMUSG00000003382.19"/>
</dbReference>
<dbReference type="Ensembl" id="ENSMUST00000170036.8">
    <property type="protein sequence ID" value="ENSMUSP00000127419.2"/>
    <property type="gene ID" value="ENSMUSG00000003382.19"/>
</dbReference>
<dbReference type="GeneID" id="27049"/>
<dbReference type="KEGG" id="mmu:27049"/>
<dbReference type="UCSC" id="uc008psh.2">
    <property type="organism name" value="mouse"/>
</dbReference>
<dbReference type="AGR" id="MGI:1350926"/>
<dbReference type="CTD" id="2117"/>
<dbReference type="MGI" id="MGI:1350926">
    <property type="gene designation" value="Etv3"/>
</dbReference>
<dbReference type="VEuPathDB" id="HostDB:ENSMUSG00000003382"/>
<dbReference type="eggNOG" id="KOG3806">
    <property type="taxonomic scope" value="Eukaryota"/>
</dbReference>
<dbReference type="GeneTree" id="ENSGT00940000160963"/>
<dbReference type="HOGENOM" id="CLU_023454_1_0_1"/>
<dbReference type="InParanoid" id="Q8R4Z4"/>
<dbReference type="OMA" id="DTHSPTN"/>
<dbReference type="OrthoDB" id="10067219at2759"/>
<dbReference type="PhylomeDB" id="Q8R4Z4"/>
<dbReference type="TreeFam" id="TF351065"/>
<dbReference type="BioGRID-ORCS" id="27049">
    <property type="hits" value="1 hit in 80 CRISPR screens"/>
</dbReference>
<dbReference type="ChiTaRS" id="Etv3">
    <property type="organism name" value="mouse"/>
</dbReference>
<dbReference type="PRO" id="PR:Q8R4Z4"/>
<dbReference type="Proteomes" id="UP000000589">
    <property type="component" value="Chromosome 3"/>
</dbReference>
<dbReference type="RNAct" id="Q8R4Z4">
    <property type="molecule type" value="protein"/>
</dbReference>
<dbReference type="Bgee" id="ENSMUSG00000003382">
    <property type="expression patterns" value="Expressed in mesenteric lymph node and 250 other cell types or tissues"/>
</dbReference>
<dbReference type="ExpressionAtlas" id="Q8R4Z4">
    <property type="expression patterns" value="baseline and differential"/>
</dbReference>
<dbReference type="GO" id="GO:0000785">
    <property type="term" value="C:chromatin"/>
    <property type="evidence" value="ECO:0000314"/>
    <property type="project" value="BHF-UCL"/>
</dbReference>
<dbReference type="GO" id="GO:0005654">
    <property type="term" value="C:nucleoplasm"/>
    <property type="evidence" value="ECO:0007669"/>
    <property type="project" value="Ensembl"/>
</dbReference>
<dbReference type="GO" id="GO:0090571">
    <property type="term" value="C:RNA polymerase II transcription repressor complex"/>
    <property type="evidence" value="ECO:0000314"/>
    <property type="project" value="BHF-UCL"/>
</dbReference>
<dbReference type="GO" id="GO:0017053">
    <property type="term" value="C:transcription repressor complex"/>
    <property type="evidence" value="ECO:0000314"/>
    <property type="project" value="MGI"/>
</dbReference>
<dbReference type="GO" id="GO:0017151">
    <property type="term" value="F:DEAD/H-box RNA helicase binding"/>
    <property type="evidence" value="ECO:0000353"/>
    <property type="project" value="BHF-UCL"/>
</dbReference>
<dbReference type="GO" id="GO:0001227">
    <property type="term" value="F:DNA-binding transcription repressor activity, RNA polymerase II-specific"/>
    <property type="evidence" value="ECO:0000314"/>
    <property type="project" value="BHF-UCL"/>
</dbReference>
<dbReference type="GO" id="GO:0000977">
    <property type="term" value="F:RNA polymerase II transcription regulatory region sequence-specific DNA binding"/>
    <property type="evidence" value="ECO:0000314"/>
    <property type="project" value="BHF-UCL"/>
</dbReference>
<dbReference type="GO" id="GO:0097011">
    <property type="term" value="P:cellular response to granulocyte macrophage colony-stimulating factor stimulus"/>
    <property type="evidence" value="ECO:0000314"/>
    <property type="project" value="BHF-UCL"/>
</dbReference>
<dbReference type="GO" id="GO:0008285">
    <property type="term" value="P:negative regulation of cell population proliferation"/>
    <property type="evidence" value="ECO:0000314"/>
    <property type="project" value="BHF-UCL"/>
</dbReference>
<dbReference type="GO" id="GO:0000122">
    <property type="term" value="P:negative regulation of transcription by RNA polymerase II"/>
    <property type="evidence" value="ECO:0000314"/>
    <property type="project" value="BHF-UCL"/>
</dbReference>
<dbReference type="FunFam" id="1.10.10.10:FF:000059">
    <property type="entry name" value="ETS translocation variant 3"/>
    <property type="match status" value="1"/>
</dbReference>
<dbReference type="Gene3D" id="1.10.10.10">
    <property type="entry name" value="Winged helix-like DNA-binding domain superfamily/Winged helix DNA-binding domain"/>
    <property type="match status" value="1"/>
</dbReference>
<dbReference type="InterPro" id="IPR000418">
    <property type="entry name" value="Ets_dom"/>
</dbReference>
<dbReference type="InterPro" id="IPR046328">
    <property type="entry name" value="ETS_fam"/>
</dbReference>
<dbReference type="InterPro" id="IPR036388">
    <property type="entry name" value="WH-like_DNA-bd_sf"/>
</dbReference>
<dbReference type="InterPro" id="IPR036390">
    <property type="entry name" value="WH_DNA-bd_sf"/>
</dbReference>
<dbReference type="PANTHER" id="PTHR11849">
    <property type="entry name" value="ETS"/>
    <property type="match status" value="1"/>
</dbReference>
<dbReference type="PANTHER" id="PTHR11849:SF306">
    <property type="entry name" value="ETS TRANSLOCATION VARIANT 3-LIKE PROTEIN"/>
    <property type="match status" value="1"/>
</dbReference>
<dbReference type="Pfam" id="PF00178">
    <property type="entry name" value="Ets"/>
    <property type="match status" value="1"/>
</dbReference>
<dbReference type="PRINTS" id="PR00454">
    <property type="entry name" value="ETSDOMAIN"/>
</dbReference>
<dbReference type="SMART" id="SM00413">
    <property type="entry name" value="ETS"/>
    <property type="match status" value="1"/>
</dbReference>
<dbReference type="SUPFAM" id="SSF46785">
    <property type="entry name" value="Winged helix' DNA-binding domain"/>
    <property type="match status" value="1"/>
</dbReference>
<dbReference type="PROSITE" id="PS00345">
    <property type="entry name" value="ETS_DOMAIN_1"/>
    <property type="match status" value="1"/>
</dbReference>
<dbReference type="PROSITE" id="PS00346">
    <property type="entry name" value="ETS_DOMAIN_2"/>
    <property type="match status" value="1"/>
</dbReference>
<dbReference type="PROSITE" id="PS50061">
    <property type="entry name" value="ETS_DOMAIN_3"/>
    <property type="match status" value="1"/>
</dbReference>
<accession>Q8R4Z4</accession>
<accession>G5E907</accession>
<accession>Q9QZW1</accession>
<keyword id="KW-0007">Acetylation</keyword>
<keyword id="KW-0238">DNA-binding</keyword>
<keyword id="KW-1017">Isopeptide bond</keyword>
<keyword id="KW-0539">Nucleus</keyword>
<keyword id="KW-0597">Phosphoprotein</keyword>
<keyword id="KW-1185">Reference proteome</keyword>
<keyword id="KW-0678">Repressor</keyword>
<keyword id="KW-0804">Transcription</keyword>
<keyword id="KW-0805">Transcription regulation</keyword>
<keyword id="KW-0832">Ubl conjugation</keyword>